<organism>
    <name type="scientific">Chassalia parviflora</name>
    <dbReference type="NCBI Taxonomy" id="58431"/>
    <lineage>
        <taxon>Eukaryota</taxon>
        <taxon>Viridiplantae</taxon>
        <taxon>Streptophyta</taxon>
        <taxon>Embryophyta</taxon>
        <taxon>Tracheophyta</taxon>
        <taxon>Spermatophyta</taxon>
        <taxon>Magnoliopsida</taxon>
        <taxon>eudicotyledons</taxon>
        <taxon>Gunneridae</taxon>
        <taxon>Pentapetalae</taxon>
        <taxon>asterids</taxon>
        <taxon>lamiids</taxon>
        <taxon>Gentianales</taxon>
        <taxon>Rubiaceae</taxon>
        <taxon>Rubioideae</taxon>
        <taxon>Palicoureeae</taxon>
        <taxon>Chassalia</taxon>
    </lineage>
</organism>
<comment type="function">
    <text evidence="2 3 4">Probably participates in a plant defense mechanism. Inhibits the cytopathic effects of the human immunodeficiency virus.</text>
</comment>
<comment type="domain">
    <text evidence="1">The presence of a 'disulfide through disulfide knot' structurally defines this protein as a knottin.</text>
</comment>
<comment type="PTM">
    <text evidence="2 3">This is a cyclic peptide.</text>
</comment>
<comment type="mass spectrometry" mass="3396.4" method="FAB" evidence="3"/>
<comment type="similarity">
    <text evidence="2">Belongs to the cyclotide family. Bracelet subfamily.</text>
</comment>
<comment type="caution">
    <text evidence="4">This peptide is cyclic. The start position was chosen by similarity to OAK1 (kalata-B1) for which the DNA sequence is known.</text>
</comment>
<name>CIRE_CHAPA</name>
<feature type="peptide" id="PRO_0000043602" description="Circulin-E" evidence="2 3">
    <location>
        <begin position="1"/>
        <end position="30"/>
    </location>
</feature>
<feature type="disulfide bond" evidence="1 2">
    <location>
        <begin position="4"/>
        <end position="20"/>
    </location>
</feature>
<feature type="disulfide bond" evidence="1 2">
    <location>
        <begin position="8"/>
        <end position="22"/>
    </location>
</feature>
<feature type="disulfide bond" evidence="1 2">
    <location>
        <begin position="13"/>
        <end position="27"/>
    </location>
</feature>
<feature type="cross-link" description="Cyclopeptide (Lys-Asp)" evidence="3">
    <location>
        <begin position="1"/>
        <end position="30"/>
    </location>
</feature>
<dbReference type="SMR" id="P84643"/>
<dbReference type="GO" id="GO:0006952">
    <property type="term" value="P:defense response"/>
    <property type="evidence" value="ECO:0000314"/>
    <property type="project" value="UniProtKB"/>
</dbReference>
<dbReference type="GO" id="GO:0050688">
    <property type="term" value="P:regulation of defense response to virus"/>
    <property type="evidence" value="ECO:0007669"/>
    <property type="project" value="UniProtKB-KW"/>
</dbReference>
<dbReference type="InterPro" id="IPR005535">
    <property type="entry name" value="Cyclotide"/>
</dbReference>
<dbReference type="InterPro" id="IPR012323">
    <property type="entry name" value="Cyclotide_bracelet_CS"/>
</dbReference>
<dbReference type="InterPro" id="IPR036146">
    <property type="entry name" value="Cyclotide_sf"/>
</dbReference>
<dbReference type="Pfam" id="PF03784">
    <property type="entry name" value="Cyclotide"/>
    <property type="match status" value="1"/>
</dbReference>
<dbReference type="PIRSF" id="PIRSF037891">
    <property type="entry name" value="Cycloviolacin"/>
    <property type="match status" value="1"/>
</dbReference>
<dbReference type="SUPFAM" id="SSF57038">
    <property type="entry name" value="Cyclotides"/>
    <property type="match status" value="1"/>
</dbReference>
<dbReference type="PROSITE" id="PS51052">
    <property type="entry name" value="CYCLOTIDE"/>
    <property type="match status" value="1"/>
</dbReference>
<dbReference type="PROSITE" id="PS60008">
    <property type="entry name" value="CYCLOTIDE_BRACELET"/>
    <property type="match status" value="1"/>
</dbReference>
<proteinExistence type="evidence at protein level"/>
<protein>
    <recommendedName>
        <fullName>Circulin-E</fullName>
        <shortName>CIRE</shortName>
    </recommendedName>
</protein>
<reference evidence="4" key="1">
    <citation type="journal article" date="2000" name="J. Nat. Prod.">
        <title>New circulin macrocyclic polypeptides from Chassalia parvifolia.</title>
        <authorList>
            <person name="Gustafson K.R."/>
            <person name="Walton L.K."/>
            <person name="Sowder R.C. Jr."/>
            <person name="Johnson D.G."/>
            <person name="Pannell L.K."/>
            <person name="Cardellina J.H. Jr."/>
            <person name="Boyd M.R."/>
        </authorList>
    </citation>
    <scope>PROTEIN SEQUENCE</scope>
    <scope>FUNCTION</scope>
    <scope>MASS SPECTROMETRY</scope>
</reference>
<evidence type="ECO:0000250" key="1">
    <source>
        <dbReference type="UniProtKB" id="P56871"/>
    </source>
</evidence>
<evidence type="ECO:0000255" key="2">
    <source>
        <dbReference type="PROSITE-ProRule" id="PRU00395"/>
    </source>
</evidence>
<evidence type="ECO:0000269" key="3">
    <source>
    </source>
</evidence>
<evidence type="ECO:0000305" key="4"/>
<accession>P84643</accession>
<sequence length="30" mass="3420">KIPCGESCVWIPCLTSVFNCKCENKVCYHD</sequence>
<keyword id="KW-0930">Antiviral protein</keyword>
<keyword id="KW-0903">Direct protein sequencing</keyword>
<keyword id="KW-1015">Disulfide bond</keyword>
<keyword id="KW-0960">Knottin</keyword>
<keyword id="KW-0611">Plant defense</keyword>